<gene>
    <name evidence="1" type="primary">uvrA</name>
    <name type="ordered locus">SCO1958</name>
    <name type="ORF">SCC54.18c</name>
</gene>
<keyword id="KW-0067">ATP-binding</keyword>
<keyword id="KW-0963">Cytoplasm</keyword>
<keyword id="KW-0227">DNA damage</keyword>
<keyword id="KW-0228">DNA excision</keyword>
<keyword id="KW-0234">DNA repair</keyword>
<keyword id="KW-0238">DNA-binding</keyword>
<keyword id="KW-0267">Excision nuclease</keyword>
<keyword id="KW-0479">Metal-binding</keyword>
<keyword id="KW-0547">Nucleotide-binding</keyword>
<keyword id="KW-1185">Reference proteome</keyword>
<keyword id="KW-0677">Repeat</keyword>
<keyword id="KW-0742">SOS response</keyword>
<keyword id="KW-0862">Zinc</keyword>
<keyword id="KW-0863">Zinc-finger</keyword>
<name>UVRA_STRCO</name>
<feature type="chain" id="PRO_0000093098" description="UvrABC system protein A">
    <location>
        <begin position="1"/>
        <end position="1014"/>
    </location>
</feature>
<feature type="domain" description="ABC transporter 1" evidence="1">
    <location>
        <begin position="314"/>
        <end position="592"/>
    </location>
</feature>
<feature type="domain" description="ABC transporter 2" evidence="1">
    <location>
        <begin position="612"/>
        <end position="941"/>
    </location>
</feature>
<feature type="zinc finger region" description="C4-type" evidence="1">
    <location>
        <begin position="744"/>
        <end position="770"/>
    </location>
</feature>
<feature type="region of interest" description="Disordered" evidence="2">
    <location>
        <begin position="976"/>
        <end position="1014"/>
    </location>
</feature>
<feature type="compositionally biased region" description="Low complexity" evidence="2">
    <location>
        <begin position="976"/>
        <end position="995"/>
    </location>
</feature>
<feature type="compositionally biased region" description="Basic residues" evidence="2">
    <location>
        <begin position="996"/>
        <end position="1014"/>
    </location>
</feature>
<feature type="binding site" evidence="1">
    <location>
        <begin position="32"/>
        <end position="39"/>
    </location>
    <ligand>
        <name>ATP</name>
        <dbReference type="ChEBI" id="CHEBI:30616"/>
    </ligand>
</feature>
<feature type="binding site" evidence="1">
    <location>
        <begin position="645"/>
        <end position="652"/>
    </location>
    <ligand>
        <name>ATP</name>
        <dbReference type="ChEBI" id="CHEBI:30616"/>
    </ligand>
</feature>
<sequence>MADRLIVRGAREHNLKNVSLDLPRDSLIVFTGLSGSGKSSLAFDTIFAEGQRRYVESLSSYARQFLGQMDKPDVDFIEGLSPAVSIDQKSTSRNPRSTVGTITEVYDYLRLLFARIGKPHCPECGRPISRQSPQAIVDKVLELPEGSRFQVLSPLVRERKGEFVDLFADLQTKGYSRARVDGETVQLSNPPTLKKQEKHTIEVVVDRLTVKDSAKRRLTDSVETALGLSGGMVVLDFVDLPEDDPERERMYSEHLYCPYDDLSFEELEPRSFSFNSPFGACPDCSGIGTRMEVDAELIVPDEDKSLDEGAIHPWSHGHTKDYFGRLIGALADALGFRTDIPFAGLPLRARKALLYGHKTQVEVRYRNRYGRERRYTTAFEGAIPFVKRRHSEAESDASRERFEGYMREVPCPTCQGTRLKPLVLAVTVMGKSIAEVSAMSISDCADFLGELTLNARDKKIAERVLKEVNERLRFLVDVGLDYLSLNRAAGTLSGGEAQRIRLATQIGSGLVGVLYVLDEPSIGLHQRDNHRLIETLVRLRDMGNTLIVVEHDEDTIKVADWIVDIGPGAGEHGGKVVHSGSVKELLDNAESQTGLYLSGRKAIPLPDIRRPQDPSRRLTVHGARENNLQDIDVSFPLGVFTAVTGVSGSGKSTLVNDILYTHLARELNGARNVPGRHTRVDGDDLVDKVVHVDQSPIGRTPRSNPATYTGVFDHIRKLFAETTEAKVRGYLPGRFSFNVKGGRCENCAGDGTIKIEMNFLPDVYVPCEVCHGARYNRETLEVHYKGKSIADVLNMPIEEATDFFEAVPAISRHMKTLKDVGLGYVRLGQSATTLSGGEAQRVKLASELQRRSTGRTVYVLDEPTTGLHFEDISKLLTVLGGLVDKGNTVIVIEHNLDVIKTADWVVDMGPEGGAGGGLVVAEGTPEQVAGVPASHTGKFLRDVLGADRVSDAAPVTRPRKAAKTVAAKAAAKKTATKTVTGTAAKKATATRTAKTAVKKAAKPAAKKTTRTSKA</sequence>
<proteinExistence type="inferred from homology"/>
<evidence type="ECO:0000255" key="1">
    <source>
        <dbReference type="HAMAP-Rule" id="MF_00205"/>
    </source>
</evidence>
<evidence type="ECO:0000256" key="2">
    <source>
        <dbReference type="SAM" id="MobiDB-lite"/>
    </source>
</evidence>
<comment type="function">
    <text evidence="1">The UvrABC repair system catalyzes the recognition and processing of DNA lesions. UvrA is an ATPase and a DNA-binding protein. A damage recognition complex composed of 2 UvrA and 2 UvrB subunits scans DNA for abnormalities. When the presence of a lesion has been verified by UvrB, the UvrA molecules dissociate.</text>
</comment>
<comment type="subunit">
    <text evidence="1">Forms a heterotetramer with UvrB during the search for lesions.</text>
</comment>
<comment type="subcellular location">
    <subcellularLocation>
        <location evidence="1">Cytoplasm</location>
    </subcellularLocation>
</comment>
<comment type="similarity">
    <text evidence="1">Belongs to the ABC transporter superfamily. UvrA family.</text>
</comment>
<protein>
    <recommendedName>
        <fullName evidence="1">UvrABC system protein A</fullName>
        <shortName evidence="1">UvrA protein</shortName>
    </recommendedName>
    <alternativeName>
        <fullName evidence="1">Excinuclease ABC subunit A</fullName>
    </alternativeName>
</protein>
<dbReference type="EMBL" id="AL939110">
    <property type="protein sequence ID" value="CAB38148.1"/>
    <property type="molecule type" value="Genomic_DNA"/>
</dbReference>
<dbReference type="PIR" id="T36031">
    <property type="entry name" value="T36031"/>
</dbReference>
<dbReference type="RefSeq" id="NP_626222.1">
    <property type="nucleotide sequence ID" value="NC_003888.3"/>
</dbReference>
<dbReference type="RefSeq" id="WP_011028066.1">
    <property type="nucleotide sequence ID" value="NZ_VNID01000001.1"/>
</dbReference>
<dbReference type="SMR" id="Q9Z507"/>
<dbReference type="FunCoup" id="Q9Z507">
    <property type="interactions" value="20"/>
</dbReference>
<dbReference type="STRING" id="100226.gene:17759555"/>
<dbReference type="PaxDb" id="100226-SCO1958"/>
<dbReference type="KEGG" id="sco:SCO1958"/>
<dbReference type="PATRIC" id="fig|100226.15.peg.1984"/>
<dbReference type="eggNOG" id="COG0178">
    <property type="taxonomic scope" value="Bacteria"/>
</dbReference>
<dbReference type="HOGENOM" id="CLU_001370_0_2_11"/>
<dbReference type="InParanoid" id="Q9Z507"/>
<dbReference type="OrthoDB" id="9809851at2"/>
<dbReference type="PhylomeDB" id="Q9Z507"/>
<dbReference type="Proteomes" id="UP000001973">
    <property type="component" value="Chromosome"/>
</dbReference>
<dbReference type="GO" id="GO:0005737">
    <property type="term" value="C:cytoplasm"/>
    <property type="evidence" value="ECO:0007669"/>
    <property type="project" value="UniProtKB-SubCell"/>
</dbReference>
<dbReference type="GO" id="GO:0009380">
    <property type="term" value="C:excinuclease repair complex"/>
    <property type="evidence" value="ECO:0007669"/>
    <property type="project" value="InterPro"/>
</dbReference>
<dbReference type="GO" id="GO:0005524">
    <property type="term" value="F:ATP binding"/>
    <property type="evidence" value="ECO:0007669"/>
    <property type="project" value="UniProtKB-UniRule"/>
</dbReference>
<dbReference type="GO" id="GO:0016887">
    <property type="term" value="F:ATP hydrolysis activity"/>
    <property type="evidence" value="ECO:0007669"/>
    <property type="project" value="InterPro"/>
</dbReference>
<dbReference type="GO" id="GO:0003677">
    <property type="term" value="F:DNA binding"/>
    <property type="evidence" value="ECO:0007669"/>
    <property type="project" value="UniProtKB-UniRule"/>
</dbReference>
<dbReference type="GO" id="GO:0009381">
    <property type="term" value="F:excinuclease ABC activity"/>
    <property type="evidence" value="ECO:0007669"/>
    <property type="project" value="UniProtKB-UniRule"/>
</dbReference>
<dbReference type="GO" id="GO:0008270">
    <property type="term" value="F:zinc ion binding"/>
    <property type="evidence" value="ECO:0007669"/>
    <property type="project" value="UniProtKB-UniRule"/>
</dbReference>
<dbReference type="GO" id="GO:0006289">
    <property type="term" value="P:nucleotide-excision repair"/>
    <property type="evidence" value="ECO:0007669"/>
    <property type="project" value="UniProtKB-UniRule"/>
</dbReference>
<dbReference type="GO" id="GO:0009432">
    <property type="term" value="P:SOS response"/>
    <property type="evidence" value="ECO:0007669"/>
    <property type="project" value="UniProtKB-UniRule"/>
</dbReference>
<dbReference type="CDD" id="cd03270">
    <property type="entry name" value="ABC_UvrA_I"/>
    <property type="match status" value="1"/>
</dbReference>
<dbReference type="CDD" id="cd03271">
    <property type="entry name" value="ABC_UvrA_II"/>
    <property type="match status" value="1"/>
</dbReference>
<dbReference type="FunFam" id="1.20.1580.10:FF:000002">
    <property type="entry name" value="UvrABC system protein A"/>
    <property type="match status" value="1"/>
</dbReference>
<dbReference type="FunFam" id="1.20.1580.10:FF:000003">
    <property type="entry name" value="UvrABC system protein A"/>
    <property type="match status" value="1"/>
</dbReference>
<dbReference type="Gene3D" id="1.10.8.280">
    <property type="entry name" value="ABC transporter ATPase domain-like"/>
    <property type="match status" value="1"/>
</dbReference>
<dbReference type="Gene3D" id="1.20.1580.10">
    <property type="entry name" value="ABC transporter ATPase like domain"/>
    <property type="match status" value="2"/>
</dbReference>
<dbReference type="Gene3D" id="3.30.1490.20">
    <property type="entry name" value="ATP-grasp fold, A domain"/>
    <property type="match status" value="1"/>
</dbReference>
<dbReference type="Gene3D" id="3.40.50.300">
    <property type="entry name" value="P-loop containing nucleotide triphosphate hydrolases"/>
    <property type="match status" value="2"/>
</dbReference>
<dbReference type="HAMAP" id="MF_00205">
    <property type="entry name" value="UvrA"/>
    <property type="match status" value="1"/>
</dbReference>
<dbReference type="InterPro" id="IPR003439">
    <property type="entry name" value="ABC_transporter-like_ATP-bd"/>
</dbReference>
<dbReference type="InterPro" id="IPR017871">
    <property type="entry name" value="ABC_transporter-like_CS"/>
</dbReference>
<dbReference type="InterPro" id="IPR013815">
    <property type="entry name" value="ATP_grasp_subdomain_1"/>
</dbReference>
<dbReference type="InterPro" id="IPR027417">
    <property type="entry name" value="P-loop_NTPase"/>
</dbReference>
<dbReference type="InterPro" id="IPR004602">
    <property type="entry name" value="UvrA"/>
</dbReference>
<dbReference type="InterPro" id="IPR041552">
    <property type="entry name" value="UvrA_DNA-bd"/>
</dbReference>
<dbReference type="InterPro" id="IPR041102">
    <property type="entry name" value="UvrA_inter"/>
</dbReference>
<dbReference type="NCBIfam" id="NF001503">
    <property type="entry name" value="PRK00349.1"/>
    <property type="match status" value="1"/>
</dbReference>
<dbReference type="NCBIfam" id="TIGR00630">
    <property type="entry name" value="uvra"/>
    <property type="match status" value="1"/>
</dbReference>
<dbReference type="PANTHER" id="PTHR43152">
    <property type="entry name" value="UVRABC SYSTEM PROTEIN A"/>
    <property type="match status" value="1"/>
</dbReference>
<dbReference type="PANTHER" id="PTHR43152:SF3">
    <property type="entry name" value="UVRABC SYSTEM PROTEIN A"/>
    <property type="match status" value="1"/>
</dbReference>
<dbReference type="Pfam" id="PF00005">
    <property type="entry name" value="ABC_tran"/>
    <property type="match status" value="1"/>
</dbReference>
<dbReference type="Pfam" id="PF17755">
    <property type="entry name" value="UvrA_DNA-bind"/>
    <property type="match status" value="1"/>
</dbReference>
<dbReference type="Pfam" id="PF17760">
    <property type="entry name" value="UvrA_inter"/>
    <property type="match status" value="1"/>
</dbReference>
<dbReference type="SUPFAM" id="SSF52540">
    <property type="entry name" value="P-loop containing nucleoside triphosphate hydrolases"/>
    <property type="match status" value="2"/>
</dbReference>
<dbReference type="PROSITE" id="PS00211">
    <property type="entry name" value="ABC_TRANSPORTER_1"/>
    <property type="match status" value="2"/>
</dbReference>
<dbReference type="PROSITE" id="PS50893">
    <property type="entry name" value="ABC_TRANSPORTER_2"/>
    <property type="match status" value="1"/>
</dbReference>
<reference key="1">
    <citation type="journal article" date="2002" name="Nature">
        <title>Complete genome sequence of the model actinomycete Streptomyces coelicolor A3(2).</title>
        <authorList>
            <person name="Bentley S.D."/>
            <person name="Chater K.F."/>
            <person name="Cerdeno-Tarraga A.-M."/>
            <person name="Challis G.L."/>
            <person name="Thomson N.R."/>
            <person name="James K.D."/>
            <person name="Harris D.E."/>
            <person name="Quail M.A."/>
            <person name="Kieser H."/>
            <person name="Harper D."/>
            <person name="Bateman A."/>
            <person name="Brown S."/>
            <person name="Chandra G."/>
            <person name="Chen C.W."/>
            <person name="Collins M."/>
            <person name="Cronin A."/>
            <person name="Fraser A."/>
            <person name="Goble A."/>
            <person name="Hidalgo J."/>
            <person name="Hornsby T."/>
            <person name="Howarth S."/>
            <person name="Huang C.-H."/>
            <person name="Kieser T."/>
            <person name="Larke L."/>
            <person name="Murphy L.D."/>
            <person name="Oliver K."/>
            <person name="O'Neil S."/>
            <person name="Rabbinowitsch E."/>
            <person name="Rajandream M.A."/>
            <person name="Rutherford K.M."/>
            <person name="Rutter S."/>
            <person name="Seeger K."/>
            <person name="Saunders D."/>
            <person name="Sharp S."/>
            <person name="Squares R."/>
            <person name="Squares S."/>
            <person name="Taylor K."/>
            <person name="Warren T."/>
            <person name="Wietzorrek A."/>
            <person name="Woodward J.R."/>
            <person name="Barrell B.G."/>
            <person name="Parkhill J."/>
            <person name="Hopwood D.A."/>
        </authorList>
    </citation>
    <scope>NUCLEOTIDE SEQUENCE [LARGE SCALE GENOMIC DNA]</scope>
    <source>
        <strain>ATCC BAA-471 / A3(2) / M145</strain>
    </source>
</reference>
<accession>Q9Z507</accession>
<organism>
    <name type="scientific">Streptomyces coelicolor (strain ATCC BAA-471 / A3(2) / M145)</name>
    <dbReference type="NCBI Taxonomy" id="100226"/>
    <lineage>
        <taxon>Bacteria</taxon>
        <taxon>Bacillati</taxon>
        <taxon>Actinomycetota</taxon>
        <taxon>Actinomycetes</taxon>
        <taxon>Kitasatosporales</taxon>
        <taxon>Streptomycetaceae</taxon>
        <taxon>Streptomyces</taxon>
        <taxon>Streptomyces albidoflavus group</taxon>
    </lineage>
</organism>